<gene>
    <name evidence="1" type="primary">fmt</name>
    <name type="ordered locus">CbuK_2047</name>
</gene>
<comment type="function">
    <text evidence="1">Attaches a formyl group to the free amino group of methionyl-tRNA(fMet). The formyl group appears to play a dual role in the initiator identity of N-formylmethionyl-tRNA by promoting its recognition by IF2 and preventing the misappropriation of this tRNA by the elongation apparatus.</text>
</comment>
<comment type="catalytic activity">
    <reaction evidence="1">
        <text>L-methionyl-tRNA(fMet) + (6R)-10-formyltetrahydrofolate = N-formyl-L-methionyl-tRNA(fMet) + (6S)-5,6,7,8-tetrahydrofolate + H(+)</text>
        <dbReference type="Rhea" id="RHEA:24380"/>
        <dbReference type="Rhea" id="RHEA-COMP:9952"/>
        <dbReference type="Rhea" id="RHEA-COMP:9953"/>
        <dbReference type="ChEBI" id="CHEBI:15378"/>
        <dbReference type="ChEBI" id="CHEBI:57453"/>
        <dbReference type="ChEBI" id="CHEBI:78530"/>
        <dbReference type="ChEBI" id="CHEBI:78844"/>
        <dbReference type="ChEBI" id="CHEBI:195366"/>
        <dbReference type="EC" id="2.1.2.9"/>
    </reaction>
</comment>
<comment type="similarity">
    <text evidence="1">Belongs to the Fmt family.</text>
</comment>
<sequence length="314" mass="34319">MSLKIVFAGTPQFAVPTLRALIDSSHRVLAVYTQPDRPSGRGQKIMESPVKEIARQNEIPIIQPFSLRDEVEQEKLIAMNADVMVVVAYGLILPKKALNAFRLGCVNVHASLLPRWRGAAPIQRAILAGDRETGISIMQMNEGLDTGDMLAKSACVISSEDTAADLHDRLSLIGADLLLESLAKLEKGDIKLEKQDEASATYASKIQKQEALINWRKSAVEIARQVRAFNPTPIAFTYFEGQPMRIWRATVVDEKTDFEPGVLVDADKKGISIAAGSGILRLHQLQLPGKRVCSAGDFINAHGDKLIPGKTVFG</sequence>
<feature type="chain" id="PRO_1000098396" description="Methionyl-tRNA formyltransferase">
    <location>
        <begin position="1"/>
        <end position="314"/>
    </location>
</feature>
<feature type="binding site" evidence="1">
    <location>
        <begin position="111"/>
        <end position="114"/>
    </location>
    <ligand>
        <name>(6S)-5,6,7,8-tetrahydrofolate</name>
        <dbReference type="ChEBI" id="CHEBI:57453"/>
    </ligand>
</feature>
<evidence type="ECO:0000255" key="1">
    <source>
        <dbReference type="HAMAP-Rule" id="MF_00182"/>
    </source>
</evidence>
<organism>
    <name type="scientific">Coxiella burnetii (strain CbuK_Q154)</name>
    <name type="common">Coxiella burnetii (strain Q154)</name>
    <dbReference type="NCBI Taxonomy" id="434924"/>
    <lineage>
        <taxon>Bacteria</taxon>
        <taxon>Pseudomonadati</taxon>
        <taxon>Pseudomonadota</taxon>
        <taxon>Gammaproteobacteria</taxon>
        <taxon>Legionellales</taxon>
        <taxon>Coxiellaceae</taxon>
        <taxon>Coxiella</taxon>
    </lineage>
</organism>
<keyword id="KW-0648">Protein biosynthesis</keyword>
<keyword id="KW-0808">Transferase</keyword>
<reference key="1">
    <citation type="journal article" date="2009" name="Infect. Immun.">
        <title>Comparative genomics reveal extensive transposon-mediated genomic plasticity and diversity among potential effector proteins within the genus Coxiella.</title>
        <authorList>
            <person name="Beare P.A."/>
            <person name="Unsworth N."/>
            <person name="Andoh M."/>
            <person name="Voth D.E."/>
            <person name="Omsland A."/>
            <person name="Gilk S.D."/>
            <person name="Williams K.P."/>
            <person name="Sobral B.W."/>
            <person name="Kupko J.J. III"/>
            <person name="Porcella S.F."/>
            <person name="Samuel J.E."/>
            <person name="Heinzen R.A."/>
        </authorList>
    </citation>
    <scope>NUCLEOTIDE SEQUENCE [LARGE SCALE GENOMIC DNA]</scope>
    <source>
        <strain>CbuK_Q154</strain>
    </source>
</reference>
<accession>B6J655</accession>
<protein>
    <recommendedName>
        <fullName evidence="1">Methionyl-tRNA formyltransferase</fullName>
        <ecNumber evidence="1">2.1.2.9</ecNumber>
    </recommendedName>
</protein>
<proteinExistence type="inferred from homology"/>
<dbReference type="EC" id="2.1.2.9" evidence="1"/>
<dbReference type="EMBL" id="CP001020">
    <property type="protein sequence ID" value="ACJ21146.1"/>
    <property type="molecule type" value="Genomic_DNA"/>
</dbReference>
<dbReference type="RefSeq" id="WP_005769734.1">
    <property type="nucleotide sequence ID" value="NC_011528.1"/>
</dbReference>
<dbReference type="SMR" id="B6J655"/>
<dbReference type="KEGG" id="cbc:CbuK_2047"/>
<dbReference type="HOGENOM" id="CLU_033347_1_2_6"/>
<dbReference type="GO" id="GO:0005829">
    <property type="term" value="C:cytosol"/>
    <property type="evidence" value="ECO:0007669"/>
    <property type="project" value="TreeGrafter"/>
</dbReference>
<dbReference type="GO" id="GO:0004479">
    <property type="term" value="F:methionyl-tRNA formyltransferase activity"/>
    <property type="evidence" value="ECO:0007669"/>
    <property type="project" value="UniProtKB-UniRule"/>
</dbReference>
<dbReference type="CDD" id="cd08646">
    <property type="entry name" value="FMT_core_Met-tRNA-FMT_N"/>
    <property type="match status" value="1"/>
</dbReference>
<dbReference type="CDD" id="cd08704">
    <property type="entry name" value="Met_tRNA_FMT_C"/>
    <property type="match status" value="1"/>
</dbReference>
<dbReference type="FunFam" id="3.40.50.170:FF:000003">
    <property type="entry name" value="Methionyl-tRNA formyltransferase"/>
    <property type="match status" value="1"/>
</dbReference>
<dbReference type="Gene3D" id="3.10.25.10">
    <property type="entry name" value="Formyl transferase, C-terminal domain"/>
    <property type="match status" value="1"/>
</dbReference>
<dbReference type="Gene3D" id="3.40.50.170">
    <property type="entry name" value="Formyl transferase, N-terminal domain"/>
    <property type="match status" value="1"/>
</dbReference>
<dbReference type="HAMAP" id="MF_00182">
    <property type="entry name" value="Formyl_trans"/>
    <property type="match status" value="1"/>
</dbReference>
<dbReference type="InterPro" id="IPR005794">
    <property type="entry name" value="Fmt"/>
</dbReference>
<dbReference type="InterPro" id="IPR005793">
    <property type="entry name" value="Formyl_trans_C"/>
</dbReference>
<dbReference type="InterPro" id="IPR037022">
    <property type="entry name" value="Formyl_trans_C_sf"/>
</dbReference>
<dbReference type="InterPro" id="IPR002376">
    <property type="entry name" value="Formyl_transf_N"/>
</dbReference>
<dbReference type="InterPro" id="IPR036477">
    <property type="entry name" value="Formyl_transf_N_sf"/>
</dbReference>
<dbReference type="InterPro" id="IPR011034">
    <property type="entry name" value="Formyl_transferase-like_C_sf"/>
</dbReference>
<dbReference type="InterPro" id="IPR001555">
    <property type="entry name" value="GART_AS"/>
</dbReference>
<dbReference type="InterPro" id="IPR044135">
    <property type="entry name" value="Met-tRNA-FMT_C"/>
</dbReference>
<dbReference type="InterPro" id="IPR041711">
    <property type="entry name" value="Met-tRNA-FMT_N"/>
</dbReference>
<dbReference type="NCBIfam" id="TIGR00460">
    <property type="entry name" value="fmt"/>
    <property type="match status" value="1"/>
</dbReference>
<dbReference type="PANTHER" id="PTHR11138">
    <property type="entry name" value="METHIONYL-TRNA FORMYLTRANSFERASE"/>
    <property type="match status" value="1"/>
</dbReference>
<dbReference type="PANTHER" id="PTHR11138:SF5">
    <property type="entry name" value="METHIONYL-TRNA FORMYLTRANSFERASE, MITOCHONDRIAL"/>
    <property type="match status" value="1"/>
</dbReference>
<dbReference type="Pfam" id="PF02911">
    <property type="entry name" value="Formyl_trans_C"/>
    <property type="match status" value="1"/>
</dbReference>
<dbReference type="Pfam" id="PF00551">
    <property type="entry name" value="Formyl_trans_N"/>
    <property type="match status" value="1"/>
</dbReference>
<dbReference type="SUPFAM" id="SSF50486">
    <property type="entry name" value="FMT C-terminal domain-like"/>
    <property type="match status" value="1"/>
</dbReference>
<dbReference type="SUPFAM" id="SSF53328">
    <property type="entry name" value="Formyltransferase"/>
    <property type="match status" value="1"/>
</dbReference>
<dbReference type="PROSITE" id="PS00373">
    <property type="entry name" value="GART"/>
    <property type="match status" value="1"/>
</dbReference>
<name>FMT_COXB1</name>